<proteinExistence type="evidence at transcript level"/>
<comment type="tissue specificity">
    <text evidence="1">Testis specific. Expressed in cancer cell lines.</text>
</comment>
<comment type="similarity">
    <text>Belongs to the CT45 family.</text>
</comment>
<accession>Q5DJT8</accession>
<accession>Q5JRH3</accession>
<feature type="chain" id="PRO_0000308947" description="Cancer/testis antigen family 45 member A2">
    <location>
        <begin position="1"/>
        <end position="189"/>
    </location>
</feature>
<feature type="sequence conflict" description="In Ref. 1; AAW66465." evidence="3" ref="1">
    <original>K</original>
    <variation>E</variation>
    <location>
        <position position="57"/>
    </location>
</feature>
<feature type="sequence conflict" description="In Ref. 1; AAW66465 and 2; CAI41545." evidence="3" ref="1 2">
    <original>F</original>
    <variation>S</variation>
    <location>
        <position position="114"/>
    </location>
</feature>
<feature type="sequence conflict" description="In Ref. 1; AAW66465 and 2; CAI41545." evidence="3" ref="1 2">
    <original>Q</original>
    <variation>K</variation>
    <location>
        <position position="129"/>
    </location>
</feature>
<name>CT452_HUMAN</name>
<sequence>MTDKTEKVAVDPETVFKRPRECDSPSYQKRQRMALLARKQGAGDSLIAGSAMSKEKKLMTGHAIPPSQLDSQIDDFTGFSKDRMMQKPGSNAPVGGNVTSSFSGDDLECRETAFSPKSQQEINADIKRQLVKELRCVGQKYEKIFEMLEGVQGPTAVRKRFFESIIKEAARCMRRDFVKHLKKKLKRMI</sequence>
<organism>
    <name type="scientific">Homo sapiens</name>
    <name type="common">Human</name>
    <dbReference type="NCBI Taxonomy" id="9606"/>
    <lineage>
        <taxon>Eukaryota</taxon>
        <taxon>Metazoa</taxon>
        <taxon>Chordata</taxon>
        <taxon>Craniata</taxon>
        <taxon>Vertebrata</taxon>
        <taxon>Euteleostomi</taxon>
        <taxon>Mammalia</taxon>
        <taxon>Eutheria</taxon>
        <taxon>Euarchontoglires</taxon>
        <taxon>Primates</taxon>
        <taxon>Haplorrhini</taxon>
        <taxon>Catarrhini</taxon>
        <taxon>Hominidae</taxon>
        <taxon>Homo</taxon>
    </lineage>
</organism>
<gene>
    <name evidence="4" type="primary">CT45A2</name>
    <name evidence="2" type="synonym">CT45-2</name>
</gene>
<evidence type="ECO:0000269" key="1">
    <source>
    </source>
</evidence>
<evidence type="ECO:0000303" key="2">
    <source>
    </source>
</evidence>
<evidence type="ECO:0000305" key="3"/>
<evidence type="ECO:0000312" key="4">
    <source>
        <dbReference type="HGNC" id="HGNC:28400"/>
    </source>
</evidence>
<reference key="1">
    <citation type="journal article" date="2005" name="Proc. Natl. Acad. Sci. U.S.A.">
        <title>Identification of cancer/testis-antigen genes by massively parallel signature sequencing.</title>
        <authorList>
            <person name="Chen Y.-T."/>
            <person name="Scanlan M.J."/>
            <person name="Venditti C.A."/>
            <person name="Chua R."/>
            <person name="Theiler G."/>
            <person name="Stevenson B.J."/>
            <person name="Iseli C."/>
            <person name="Gure A.O."/>
            <person name="Vasicek T."/>
            <person name="Strausberg R.L."/>
            <person name="Jongeneel C.V."/>
            <person name="Old L.J."/>
            <person name="Simpson A.J.G."/>
        </authorList>
    </citation>
    <scope>NUCLEOTIDE SEQUENCE [MRNA]</scope>
    <scope>TISSUE SPECIFICITY</scope>
    <scope>IDENTIFICATION AS A CANCER/TESTIS ANTIGEN</scope>
</reference>
<reference key="2">
    <citation type="journal article" date="2005" name="Nature">
        <title>The DNA sequence of the human X chromosome.</title>
        <authorList>
            <person name="Ross M.T."/>
            <person name="Grafham D.V."/>
            <person name="Coffey A.J."/>
            <person name="Scherer S."/>
            <person name="McLay K."/>
            <person name="Muzny D."/>
            <person name="Platzer M."/>
            <person name="Howell G.R."/>
            <person name="Burrows C."/>
            <person name="Bird C.P."/>
            <person name="Frankish A."/>
            <person name="Lovell F.L."/>
            <person name="Howe K.L."/>
            <person name="Ashurst J.L."/>
            <person name="Fulton R.S."/>
            <person name="Sudbrak R."/>
            <person name="Wen G."/>
            <person name="Jones M.C."/>
            <person name="Hurles M.E."/>
            <person name="Andrews T.D."/>
            <person name="Scott C.E."/>
            <person name="Searle S."/>
            <person name="Ramser J."/>
            <person name="Whittaker A."/>
            <person name="Deadman R."/>
            <person name="Carter N.P."/>
            <person name="Hunt S.E."/>
            <person name="Chen R."/>
            <person name="Cree A."/>
            <person name="Gunaratne P."/>
            <person name="Havlak P."/>
            <person name="Hodgson A."/>
            <person name="Metzker M.L."/>
            <person name="Richards S."/>
            <person name="Scott G."/>
            <person name="Steffen D."/>
            <person name="Sodergren E."/>
            <person name="Wheeler D.A."/>
            <person name="Worley K.C."/>
            <person name="Ainscough R."/>
            <person name="Ambrose K.D."/>
            <person name="Ansari-Lari M.A."/>
            <person name="Aradhya S."/>
            <person name="Ashwell R.I."/>
            <person name="Babbage A.K."/>
            <person name="Bagguley C.L."/>
            <person name="Ballabio A."/>
            <person name="Banerjee R."/>
            <person name="Barker G.E."/>
            <person name="Barlow K.F."/>
            <person name="Barrett I.P."/>
            <person name="Bates K.N."/>
            <person name="Beare D.M."/>
            <person name="Beasley H."/>
            <person name="Beasley O."/>
            <person name="Beck A."/>
            <person name="Bethel G."/>
            <person name="Blechschmidt K."/>
            <person name="Brady N."/>
            <person name="Bray-Allen S."/>
            <person name="Bridgeman A.M."/>
            <person name="Brown A.J."/>
            <person name="Brown M.J."/>
            <person name="Bonnin D."/>
            <person name="Bruford E.A."/>
            <person name="Buhay C."/>
            <person name="Burch P."/>
            <person name="Burford D."/>
            <person name="Burgess J."/>
            <person name="Burrill W."/>
            <person name="Burton J."/>
            <person name="Bye J.M."/>
            <person name="Carder C."/>
            <person name="Carrel L."/>
            <person name="Chako J."/>
            <person name="Chapman J.C."/>
            <person name="Chavez D."/>
            <person name="Chen E."/>
            <person name="Chen G."/>
            <person name="Chen Y."/>
            <person name="Chen Z."/>
            <person name="Chinault C."/>
            <person name="Ciccodicola A."/>
            <person name="Clark S.Y."/>
            <person name="Clarke G."/>
            <person name="Clee C.M."/>
            <person name="Clegg S."/>
            <person name="Clerc-Blankenburg K."/>
            <person name="Clifford K."/>
            <person name="Cobley V."/>
            <person name="Cole C.G."/>
            <person name="Conquer J.S."/>
            <person name="Corby N."/>
            <person name="Connor R.E."/>
            <person name="David R."/>
            <person name="Davies J."/>
            <person name="Davis C."/>
            <person name="Davis J."/>
            <person name="Delgado O."/>
            <person name="Deshazo D."/>
            <person name="Dhami P."/>
            <person name="Ding Y."/>
            <person name="Dinh H."/>
            <person name="Dodsworth S."/>
            <person name="Draper H."/>
            <person name="Dugan-Rocha S."/>
            <person name="Dunham A."/>
            <person name="Dunn M."/>
            <person name="Durbin K.J."/>
            <person name="Dutta I."/>
            <person name="Eades T."/>
            <person name="Ellwood M."/>
            <person name="Emery-Cohen A."/>
            <person name="Errington H."/>
            <person name="Evans K.L."/>
            <person name="Faulkner L."/>
            <person name="Francis F."/>
            <person name="Frankland J."/>
            <person name="Fraser A.E."/>
            <person name="Galgoczy P."/>
            <person name="Gilbert J."/>
            <person name="Gill R."/>
            <person name="Gloeckner G."/>
            <person name="Gregory S.G."/>
            <person name="Gribble S."/>
            <person name="Griffiths C."/>
            <person name="Grocock R."/>
            <person name="Gu Y."/>
            <person name="Gwilliam R."/>
            <person name="Hamilton C."/>
            <person name="Hart E.A."/>
            <person name="Hawes A."/>
            <person name="Heath P.D."/>
            <person name="Heitmann K."/>
            <person name="Hennig S."/>
            <person name="Hernandez J."/>
            <person name="Hinzmann B."/>
            <person name="Ho S."/>
            <person name="Hoffs M."/>
            <person name="Howden P.J."/>
            <person name="Huckle E.J."/>
            <person name="Hume J."/>
            <person name="Hunt P.J."/>
            <person name="Hunt A.R."/>
            <person name="Isherwood J."/>
            <person name="Jacob L."/>
            <person name="Johnson D."/>
            <person name="Jones S."/>
            <person name="de Jong P.J."/>
            <person name="Joseph S.S."/>
            <person name="Keenan S."/>
            <person name="Kelly S."/>
            <person name="Kershaw J.K."/>
            <person name="Khan Z."/>
            <person name="Kioschis P."/>
            <person name="Klages S."/>
            <person name="Knights A.J."/>
            <person name="Kosiura A."/>
            <person name="Kovar-Smith C."/>
            <person name="Laird G.K."/>
            <person name="Langford C."/>
            <person name="Lawlor S."/>
            <person name="Leversha M."/>
            <person name="Lewis L."/>
            <person name="Liu W."/>
            <person name="Lloyd C."/>
            <person name="Lloyd D.M."/>
            <person name="Loulseged H."/>
            <person name="Loveland J.E."/>
            <person name="Lovell J.D."/>
            <person name="Lozado R."/>
            <person name="Lu J."/>
            <person name="Lyne R."/>
            <person name="Ma J."/>
            <person name="Maheshwari M."/>
            <person name="Matthews L.H."/>
            <person name="McDowall J."/>
            <person name="McLaren S."/>
            <person name="McMurray A."/>
            <person name="Meidl P."/>
            <person name="Meitinger T."/>
            <person name="Milne S."/>
            <person name="Miner G."/>
            <person name="Mistry S.L."/>
            <person name="Morgan M."/>
            <person name="Morris S."/>
            <person name="Mueller I."/>
            <person name="Mullikin J.C."/>
            <person name="Nguyen N."/>
            <person name="Nordsiek G."/>
            <person name="Nyakatura G."/>
            <person name="O'dell C.N."/>
            <person name="Okwuonu G."/>
            <person name="Palmer S."/>
            <person name="Pandian R."/>
            <person name="Parker D."/>
            <person name="Parrish J."/>
            <person name="Pasternak S."/>
            <person name="Patel D."/>
            <person name="Pearce A.V."/>
            <person name="Pearson D.M."/>
            <person name="Pelan S.E."/>
            <person name="Perez L."/>
            <person name="Porter K.M."/>
            <person name="Ramsey Y."/>
            <person name="Reichwald K."/>
            <person name="Rhodes S."/>
            <person name="Ridler K.A."/>
            <person name="Schlessinger D."/>
            <person name="Schueler M.G."/>
            <person name="Sehra H.K."/>
            <person name="Shaw-Smith C."/>
            <person name="Shen H."/>
            <person name="Sheridan E.M."/>
            <person name="Shownkeen R."/>
            <person name="Skuce C.D."/>
            <person name="Smith M.L."/>
            <person name="Sotheran E.C."/>
            <person name="Steingruber H.E."/>
            <person name="Steward C.A."/>
            <person name="Storey R."/>
            <person name="Swann R.M."/>
            <person name="Swarbreck D."/>
            <person name="Tabor P.E."/>
            <person name="Taudien S."/>
            <person name="Taylor T."/>
            <person name="Teague B."/>
            <person name="Thomas K."/>
            <person name="Thorpe A."/>
            <person name="Timms K."/>
            <person name="Tracey A."/>
            <person name="Trevanion S."/>
            <person name="Tromans A.C."/>
            <person name="d'Urso M."/>
            <person name="Verduzco D."/>
            <person name="Villasana D."/>
            <person name="Waldron L."/>
            <person name="Wall M."/>
            <person name="Wang Q."/>
            <person name="Warren J."/>
            <person name="Warry G.L."/>
            <person name="Wei X."/>
            <person name="West A."/>
            <person name="Whitehead S.L."/>
            <person name="Whiteley M.N."/>
            <person name="Wilkinson J.E."/>
            <person name="Willey D.L."/>
            <person name="Williams G."/>
            <person name="Williams L."/>
            <person name="Williamson A."/>
            <person name="Williamson H."/>
            <person name="Wilming L."/>
            <person name="Woodmansey R.L."/>
            <person name="Wray P.W."/>
            <person name="Yen J."/>
            <person name="Zhang J."/>
            <person name="Zhou J."/>
            <person name="Zoghbi H."/>
            <person name="Zorilla S."/>
            <person name="Buck D."/>
            <person name="Reinhardt R."/>
            <person name="Poustka A."/>
            <person name="Rosenthal A."/>
            <person name="Lehrach H."/>
            <person name="Meindl A."/>
            <person name="Minx P.J."/>
            <person name="Hillier L.W."/>
            <person name="Willard H.F."/>
            <person name="Wilson R.K."/>
            <person name="Waterston R.H."/>
            <person name="Rice C.M."/>
            <person name="Vaudin M."/>
            <person name="Coulson A."/>
            <person name="Nelson D.L."/>
            <person name="Weinstock G."/>
            <person name="Sulston J.E."/>
            <person name="Durbin R.M."/>
            <person name="Hubbard T."/>
            <person name="Gibbs R.A."/>
            <person name="Beck S."/>
            <person name="Rogers J."/>
            <person name="Bentley D.R."/>
        </authorList>
    </citation>
    <scope>NUCLEOTIDE SEQUENCE [LARGE SCALE GENOMIC DNA]</scope>
</reference>
<dbReference type="EMBL" id="AY743710">
    <property type="protein sequence ID" value="AAW66465.1"/>
    <property type="molecule type" value="mRNA"/>
</dbReference>
<dbReference type="EMBL" id="AC240441">
    <property type="status" value="NOT_ANNOTATED_CDS"/>
    <property type="molecule type" value="Genomic_DNA"/>
</dbReference>
<dbReference type="EMBL" id="AL590618">
    <property type="protein sequence ID" value="CAI41545.1"/>
    <property type="molecule type" value="Genomic_DNA"/>
</dbReference>
<dbReference type="CCDS" id="CCDS76031.1"/>
<dbReference type="RefSeq" id="NP_001278464.1">
    <property type="nucleotide sequence ID" value="NM_001291535.1"/>
</dbReference>
<dbReference type="RefSeq" id="NP_001278469.1">
    <property type="nucleotide sequence ID" value="NM_001291540.2"/>
</dbReference>
<dbReference type="RefSeq" id="NP_001308200.1">
    <property type="nucleotide sequence ID" value="NM_001321271.1"/>
</dbReference>
<dbReference type="RefSeq" id="NP_689795.4">
    <property type="nucleotide sequence ID" value="NM_152582.6"/>
</dbReference>
<dbReference type="RefSeq" id="XP_006724846.1">
    <property type="nucleotide sequence ID" value="XM_006724783.3"/>
</dbReference>
<dbReference type="RefSeq" id="XP_006724859.1">
    <property type="nucleotide sequence ID" value="XM_006724796.2"/>
</dbReference>
<dbReference type="RefSeq" id="XP_006724862.1">
    <property type="nucleotide sequence ID" value="XM_006724799.2"/>
</dbReference>
<dbReference type="RefSeq" id="XP_011529543.1">
    <property type="nucleotide sequence ID" value="XM_011531241.2"/>
</dbReference>
<dbReference type="RefSeq" id="XP_011529691.1">
    <property type="nucleotide sequence ID" value="XM_011531389.3"/>
</dbReference>
<dbReference type="SMR" id="Q5DJT8"/>
<dbReference type="FunCoup" id="Q5DJT8">
    <property type="interactions" value="170"/>
</dbReference>
<dbReference type="IntAct" id="Q5DJT8">
    <property type="interactions" value="5"/>
</dbReference>
<dbReference type="STRING" id="9606.ENSP00000481184"/>
<dbReference type="GlyGen" id="Q5DJT8">
    <property type="glycosylation" value="1 site"/>
</dbReference>
<dbReference type="iPTMnet" id="Q5DJT8"/>
<dbReference type="PhosphoSitePlus" id="Q5DJT8"/>
<dbReference type="BioMuta" id="CT45A2"/>
<dbReference type="DMDM" id="160017332"/>
<dbReference type="jPOST" id="Q5DJT8"/>
<dbReference type="MassIVE" id="Q5DJT8"/>
<dbReference type="PaxDb" id="9606-ENSP00000474632"/>
<dbReference type="Pumba" id="Q5DJT8"/>
<dbReference type="Antibodypedia" id="75887">
    <property type="antibodies" value="3 antibodies from 3 providers"/>
</dbReference>
<dbReference type="DNASU" id="102723737"/>
<dbReference type="Ensembl" id="ENST00000605791.7">
    <property type="protein sequence ID" value="ENSP00000474632.2"/>
    <property type="gene ID" value="ENSG00000271449.8"/>
</dbReference>
<dbReference type="Ensembl" id="ENST00000612907.2">
    <property type="protein sequence ID" value="ENSP00000483619.1"/>
    <property type="gene ID" value="ENSG00000271449.8"/>
</dbReference>
<dbReference type="GeneID" id="102723680"/>
<dbReference type="GeneID" id="102723737"/>
<dbReference type="GeneID" id="728911"/>
<dbReference type="KEGG" id="hsa:102723680"/>
<dbReference type="KEGG" id="hsa:102723737"/>
<dbReference type="KEGG" id="hsa:728911"/>
<dbReference type="MANE-Select" id="ENST00000612907.2">
    <property type="protein sequence ID" value="ENSP00000483619.1"/>
    <property type="RefSeq nucleotide sequence ID" value="NM_152582.7"/>
    <property type="RefSeq protein sequence ID" value="NP_689795.4"/>
</dbReference>
<dbReference type="AGR" id="HGNC:28400"/>
<dbReference type="AGR" id="HGNC:51261"/>
<dbReference type="AGR" id="HGNC:51262"/>
<dbReference type="CTD" id="102723680"/>
<dbReference type="CTD" id="102723737"/>
<dbReference type="CTD" id="728911"/>
<dbReference type="DisGeNET" id="102723680"/>
<dbReference type="DisGeNET" id="102723737"/>
<dbReference type="DisGeNET" id="728911"/>
<dbReference type="GeneCards" id="CT45A2"/>
<dbReference type="HGNC" id="HGNC:28400">
    <property type="gene designation" value="CT45A2"/>
</dbReference>
<dbReference type="HPA" id="ENSG00000271449">
    <property type="expression patterns" value="Not detected"/>
</dbReference>
<dbReference type="MIM" id="300793">
    <property type="type" value="gene"/>
</dbReference>
<dbReference type="neXtProt" id="NX_Q5DJT8"/>
<dbReference type="OpenTargets" id="ENSG00000271449"/>
<dbReference type="PharmGKB" id="PA164718186"/>
<dbReference type="VEuPathDB" id="HostDB:ENSG00000271449"/>
<dbReference type="eggNOG" id="KOG3768">
    <property type="taxonomic scope" value="Eukaryota"/>
</dbReference>
<dbReference type="GeneTree" id="ENSGT00390000016655"/>
<dbReference type="InParanoid" id="Q5DJT8"/>
<dbReference type="OMA" id="SKKMQRM"/>
<dbReference type="OrthoDB" id="9520782at2759"/>
<dbReference type="PAN-GO" id="Q5DJT8">
    <property type="GO annotations" value="2 GO annotations based on evolutionary models"/>
</dbReference>
<dbReference type="PhylomeDB" id="Q5DJT8"/>
<dbReference type="PathwayCommons" id="Q5DJT8"/>
<dbReference type="SignaLink" id="Q5DJT8"/>
<dbReference type="BioGRID-ORCS" id="102723680">
    <property type="hits" value="4 hits in 86 CRISPR screens"/>
</dbReference>
<dbReference type="BioGRID-ORCS" id="102723737">
    <property type="hits" value="2 hits in 4 CRISPR screens"/>
</dbReference>
<dbReference type="BioGRID-ORCS" id="728911">
    <property type="hits" value="13 hits in 215 CRISPR screens"/>
</dbReference>
<dbReference type="Pharos" id="Q5DJT8">
    <property type="development level" value="Tdark"/>
</dbReference>
<dbReference type="PRO" id="PR:Q5DJT8"/>
<dbReference type="Proteomes" id="UP000005640">
    <property type="component" value="Chromosome X"/>
</dbReference>
<dbReference type="RNAct" id="Q5DJT8">
    <property type="molecule type" value="protein"/>
</dbReference>
<dbReference type="Bgee" id="ENSG00000271449">
    <property type="expression patterns" value="Expressed in primordial germ cell in gonad and 15 other cell types or tissues"/>
</dbReference>
<dbReference type="InterPro" id="IPR029307">
    <property type="entry name" value="INT_SG_DDX_CT_C"/>
</dbReference>
<dbReference type="InterPro" id="IPR051113">
    <property type="entry name" value="Integrator_subunit6"/>
</dbReference>
<dbReference type="PANTHER" id="PTHR12957">
    <property type="entry name" value="DEAD/H BOX POLYPEPTIDE 26/DICE1-RELATED"/>
    <property type="match status" value="1"/>
</dbReference>
<dbReference type="PANTHER" id="PTHR12957:SF2">
    <property type="entry name" value="INTEGRATOR COMPLEX SUBUNIT 6"/>
    <property type="match status" value="1"/>
</dbReference>
<dbReference type="Pfam" id="PF15300">
    <property type="entry name" value="INT_SG_DDX_CT_C"/>
    <property type="match status" value="1"/>
</dbReference>
<keyword id="KW-1185">Reference proteome</keyword>
<protein>
    <recommendedName>
        <fullName evidence="4">Cancer/testis antigen family 45 member A2</fullName>
    </recommendedName>
    <alternativeName>
        <fullName evidence="2">Cancer/testis antigen 45-2</fullName>
    </alternativeName>
    <alternativeName>
        <fullName evidence="3">Cancer/testis antigen 45A2</fullName>
    </alternativeName>
</protein>